<feature type="chain" id="PRO_0000121598" description="tRNA-specific 2-thiouridylase MnmA">
    <location>
        <begin position="1"/>
        <end position="377"/>
    </location>
</feature>
<feature type="region of interest" description="Interaction with target base in tRNA" evidence="1">
    <location>
        <begin position="94"/>
        <end position="96"/>
    </location>
</feature>
<feature type="region of interest" description="Interaction with tRNA" evidence="1">
    <location>
        <begin position="151"/>
        <end position="153"/>
    </location>
</feature>
<feature type="region of interest" description="Interaction with tRNA" evidence="1">
    <location>
        <begin position="315"/>
        <end position="316"/>
    </location>
</feature>
<feature type="active site" description="Nucleophile" evidence="1">
    <location>
        <position position="99"/>
    </location>
</feature>
<feature type="active site" description="Cysteine persulfide intermediate" evidence="1">
    <location>
        <position position="201"/>
    </location>
</feature>
<feature type="binding site" evidence="1">
    <location>
        <begin position="8"/>
        <end position="15"/>
    </location>
    <ligand>
        <name>ATP</name>
        <dbReference type="ChEBI" id="CHEBI:30616"/>
    </ligand>
</feature>
<feature type="binding site" evidence="1">
    <location>
        <position position="34"/>
    </location>
    <ligand>
        <name>ATP</name>
        <dbReference type="ChEBI" id="CHEBI:30616"/>
    </ligand>
</feature>
<feature type="binding site" evidence="1">
    <location>
        <position position="123"/>
    </location>
    <ligand>
        <name>ATP</name>
        <dbReference type="ChEBI" id="CHEBI:30616"/>
    </ligand>
</feature>
<feature type="site" description="Interaction with tRNA" evidence="1">
    <location>
        <position position="124"/>
    </location>
</feature>
<feature type="site" description="Interaction with tRNA" evidence="1">
    <location>
        <position position="350"/>
    </location>
</feature>
<feature type="disulfide bond" description="Alternate" evidence="1">
    <location>
        <begin position="99"/>
        <end position="201"/>
    </location>
</feature>
<name>MNMA_ACIAD</name>
<accession>Q6FCW2</accession>
<reference key="1">
    <citation type="journal article" date="2004" name="Nucleic Acids Res.">
        <title>Unique features revealed by the genome sequence of Acinetobacter sp. ADP1, a versatile and naturally transformation competent bacterium.</title>
        <authorList>
            <person name="Barbe V."/>
            <person name="Vallenet D."/>
            <person name="Fonknechten N."/>
            <person name="Kreimeyer A."/>
            <person name="Oztas S."/>
            <person name="Labarre L."/>
            <person name="Cruveiller S."/>
            <person name="Robert C."/>
            <person name="Duprat S."/>
            <person name="Wincker P."/>
            <person name="Ornston L.N."/>
            <person name="Weissenbach J."/>
            <person name="Marliere P."/>
            <person name="Cohen G.N."/>
            <person name="Medigue C."/>
        </authorList>
    </citation>
    <scope>NUCLEOTIDE SEQUENCE [LARGE SCALE GENOMIC DNA]</scope>
    <source>
        <strain>ATCC 33305 / BD413 / ADP1</strain>
    </source>
</reference>
<protein>
    <recommendedName>
        <fullName evidence="1">tRNA-specific 2-thiouridylase MnmA</fullName>
        <ecNumber evidence="1">2.8.1.13</ecNumber>
    </recommendedName>
</protein>
<organism>
    <name type="scientific">Acinetobacter baylyi (strain ATCC 33305 / BD413 / ADP1)</name>
    <dbReference type="NCBI Taxonomy" id="62977"/>
    <lineage>
        <taxon>Bacteria</taxon>
        <taxon>Pseudomonadati</taxon>
        <taxon>Pseudomonadota</taxon>
        <taxon>Gammaproteobacteria</taxon>
        <taxon>Moraxellales</taxon>
        <taxon>Moraxellaceae</taxon>
        <taxon>Acinetobacter</taxon>
    </lineage>
</organism>
<keyword id="KW-0067">ATP-binding</keyword>
<keyword id="KW-0963">Cytoplasm</keyword>
<keyword id="KW-1015">Disulfide bond</keyword>
<keyword id="KW-0547">Nucleotide-binding</keyword>
<keyword id="KW-0694">RNA-binding</keyword>
<keyword id="KW-0808">Transferase</keyword>
<keyword id="KW-0819">tRNA processing</keyword>
<keyword id="KW-0820">tRNA-binding</keyword>
<evidence type="ECO:0000255" key="1">
    <source>
        <dbReference type="HAMAP-Rule" id="MF_00144"/>
    </source>
</evidence>
<dbReference type="EC" id="2.8.1.13" evidence="1"/>
<dbReference type="EMBL" id="CR543861">
    <property type="protein sequence ID" value="CAG68097.1"/>
    <property type="molecule type" value="Genomic_DNA"/>
</dbReference>
<dbReference type="RefSeq" id="WP_004926078.1">
    <property type="nucleotide sequence ID" value="NC_005966.1"/>
</dbReference>
<dbReference type="SMR" id="Q6FCW2"/>
<dbReference type="STRING" id="202950.GCA_001485005_00990"/>
<dbReference type="GeneID" id="45233648"/>
<dbReference type="KEGG" id="aci:ACIAD1221"/>
<dbReference type="eggNOG" id="COG0482">
    <property type="taxonomic scope" value="Bacteria"/>
</dbReference>
<dbReference type="HOGENOM" id="CLU_035188_1_0_6"/>
<dbReference type="OrthoDB" id="9800696at2"/>
<dbReference type="BioCyc" id="ASP62977:ACIAD_RS05620-MONOMER"/>
<dbReference type="Proteomes" id="UP000000430">
    <property type="component" value="Chromosome"/>
</dbReference>
<dbReference type="GO" id="GO:0005737">
    <property type="term" value="C:cytoplasm"/>
    <property type="evidence" value="ECO:0007669"/>
    <property type="project" value="UniProtKB-SubCell"/>
</dbReference>
<dbReference type="GO" id="GO:0005524">
    <property type="term" value="F:ATP binding"/>
    <property type="evidence" value="ECO:0007669"/>
    <property type="project" value="UniProtKB-KW"/>
</dbReference>
<dbReference type="GO" id="GO:0000049">
    <property type="term" value="F:tRNA binding"/>
    <property type="evidence" value="ECO:0007669"/>
    <property type="project" value="UniProtKB-KW"/>
</dbReference>
<dbReference type="GO" id="GO:0103016">
    <property type="term" value="F:tRNA-uridine 2-sulfurtransferase activity"/>
    <property type="evidence" value="ECO:0007669"/>
    <property type="project" value="UniProtKB-EC"/>
</dbReference>
<dbReference type="GO" id="GO:0002143">
    <property type="term" value="P:tRNA wobble position uridine thiolation"/>
    <property type="evidence" value="ECO:0007669"/>
    <property type="project" value="TreeGrafter"/>
</dbReference>
<dbReference type="CDD" id="cd01998">
    <property type="entry name" value="MnmA_TRMU-like"/>
    <property type="match status" value="1"/>
</dbReference>
<dbReference type="FunFam" id="2.30.30.280:FF:000001">
    <property type="entry name" value="tRNA-specific 2-thiouridylase MnmA"/>
    <property type="match status" value="1"/>
</dbReference>
<dbReference type="FunFam" id="2.40.30.10:FF:000023">
    <property type="entry name" value="tRNA-specific 2-thiouridylase MnmA"/>
    <property type="match status" value="1"/>
</dbReference>
<dbReference type="FunFam" id="3.40.50.620:FF:000004">
    <property type="entry name" value="tRNA-specific 2-thiouridylase MnmA"/>
    <property type="match status" value="1"/>
</dbReference>
<dbReference type="Gene3D" id="2.30.30.280">
    <property type="entry name" value="Adenine nucleotide alpha hydrolases-like domains"/>
    <property type="match status" value="1"/>
</dbReference>
<dbReference type="Gene3D" id="3.40.50.620">
    <property type="entry name" value="HUPs"/>
    <property type="match status" value="1"/>
</dbReference>
<dbReference type="Gene3D" id="2.40.30.10">
    <property type="entry name" value="Translation factors"/>
    <property type="match status" value="1"/>
</dbReference>
<dbReference type="HAMAP" id="MF_00144">
    <property type="entry name" value="tRNA_thiouridyl_MnmA"/>
    <property type="match status" value="1"/>
</dbReference>
<dbReference type="InterPro" id="IPR004506">
    <property type="entry name" value="MnmA-like"/>
</dbReference>
<dbReference type="InterPro" id="IPR046885">
    <property type="entry name" value="MnmA-like_C"/>
</dbReference>
<dbReference type="InterPro" id="IPR046884">
    <property type="entry name" value="MnmA-like_central"/>
</dbReference>
<dbReference type="InterPro" id="IPR023382">
    <property type="entry name" value="MnmA-like_central_sf"/>
</dbReference>
<dbReference type="InterPro" id="IPR014729">
    <property type="entry name" value="Rossmann-like_a/b/a_fold"/>
</dbReference>
<dbReference type="NCBIfam" id="NF001138">
    <property type="entry name" value="PRK00143.1"/>
    <property type="match status" value="1"/>
</dbReference>
<dbReference type="NCBIfam" id="TIGR00420">
    <property type="entry name" value="trmU"/>
    <property type="match status" value="1"/>
</dbReference>
<dbReference type="PANTHER" id="PTHR11933:SF5">
    <property type="entry name" value="MITOCHONDRIAL TRNA-SPECIFIC 2-THIOURIDYLASE 1"/>
    <property type="match status" value="1"/>
</dbReference>
<dbReference type="PANTHER" id="PTHR11933">
    <property type="entry name" value="TRNA 5-METHYLAMINOMETHYL-2-THIOURIDYLATE -METHYLTRANSFERASE"/>
    <property type="match status" value="1"/>
</dbReference>
<dbReference type="Pfam" id="PF03054">
    <property type="entry name" value="tRNA_Me_trans"/>
    <property type="match status" value="1"/>
</dbReference>
<dbReference type="Pfam" id="PF20258">
    <property type="entry name" value="tRNA_Me_trans_C"/>
    <property type="match status" value="1"/>
</dbReference>
<dbReference type="Pfam" id="PF20259">
    <property type="entry name" value="tRNA_Me_trans_M"/>
    <property type="match status" value="1"/>
</dbReference>
<dbReference type="SUPFAM" id="SSF52402">
    <property type="entry name" value="Adenine nucleotide alpha hydrolases-like"/>
    <property type="match status" value="1"/>
</dbReference>
<proteinExistence type="inferred from homology"/>
<sequence>MQQRVIVGMSGGVDSSVSAALLLQQGYQVEGLFMKNWEEDDGTEYCTALEDLADAQAVADKIGIKLHTANFAMEYWDRVFEHFLAEYAAGRTPNPDILCNKEIKFRAFIDHAMTLGADFIATGHYTRRGESMQNSRGESYAPLLRGVDNNKDQSYFLHAVHGREINKTLFPVGEIEKPEVRKIAEKLDLATAKKKDSTGICFIGERRFNDFLKQYLPAQPGKIVLDNGKEVGEHHGLMYYTLGQRGGIGLGGLKGAAEGAWFVLHKDLENNRLVIGQGHEHPLMQSTTLWSQDIDWVAGEQDIPASGFRCTAKTRYRQPDQACTIYRDEDRNNGVRVEFDEPQRAVTPGQSVVFYTNEICLGGGVILHTDAPTPDFI</sequence>
<gene>
    <name evidence="1" type="primary">mnmA</name>
    <name type="synonym">trmU</name>
    <name type="ordered locus">ACIAD1221</name>
</gene>
<comment type="function">
    <text evidence="1">Catalyzes the 2-thiolation of uridine at the wobble position (U34) of tRNA, leading to the formation of s(2)U34.</text>
</comment>
<comment type="catalytic activity">
    <reaction evidence="1">
        <text>S-sulfanyl-L-cysteinyl-[protein] + uridine(34) in tRNA + AH2 + ATP = 2-thiouridine(34) in tRNA + L-cysteinyl-[protein] + A + AMP + diphosphate + H(+)</text>
        <dbReference type="Rhea" id="RHEA:47032"/>
        <dbReference type="Rhea" id="RHEA-COMP:10131"/>
        <dbReference type="Rhea" id="RHEA-COMP:11726"/>
        <dbReference type="Rhea" id="RHEA-COMP:11727"/>
        <dbReference type="Rhea" id="RHEA-COMP:11728"/>
        <dbReference type="ChEBI" id="CHEBI:13193"/>
        <dbReference type="ChEBI" id="CHEBI:15378"/>
        <dbReference type="ChEBI" id="CHEBI:17499"/>
        <dbReference type="ChEBI" id="CHEBI:29950"/>
        <dbReference type="ChEBI" id="CHEBI:30616"/>
        <dbReference type="ChEBI" id="CHEBI:33019"/>
        <dbReference type="ChEBI" id="CHEBI:61963"/>
        <dbReference type="ChEBI" id="CHEBI:65315"/>
        <dbReference type="ChEBI" id="CHEBI:87170"/>
        <dbReference type="ChEBI" id="CHEBI:456215"/>
        <dbReference type="EC" id="2.8.1.13"/>
    </reaction>
</comment>
<comment type="subcellular location">
    <subcellularLocation>
        <location evidence="1">Cytoplasm</location>
    </subcellularLocation>
</comment>
<comment type="similarity">
    <text evidence="1">Belongs to the MnmA/TRMU family.</text>
</comment>